<reference key="1">
    <citation type="submission" date="1993-09" db="EMBL/GenBank/DDBJ databases">
        <authorList>
            <person name="Persson B.C."/>
        </authorList>
    </citation>
    <scope>NUCLEOTIDE SEQUENCE [GENOMIC DNA]</scope>
    <source>
        <strain>LT2</strain>
    </source>
</reference>
<reference key="2">
    <citation type="journal article" date="2001" name="Nature">
        <title>Complete genome sequence of Salmonella enterica serovar Typhimurium LT2.</title>
        <authorList>
            <person name="McClelland M."/>
            <person name="Sanderson K.E."/>
            <person name="Spieth J."/>
            <person name="Clifton S.W."/>
            <person name="Latreille P."/>
            <person name="Courtney L."/>
            <person name="Porwollik S."/>
            <person name="Ali J."/>
            <person name="Dante M."/>
            <person name="Du F."/>
            <person name="Hou S."/>
            <person name="Layman D."/>
            <person name="Leonard S."/>
            <person name="Nguyen C."/>
            <person name="Scott K."/>
            <person name="Holmes A."/>
            <person name="Grewal N."/>
            <person name="Mulvaney E."/>
            <person name="Ryan E."/>
            <person name="Sun H."/>
            <person name="Florea L."/>
            <person name="Miller W."/>
            <person name="Stoneking T."/>
            <person name="Nhan M."/>
            <person name="Waterston R."/>
            <person name="Wilson R.K."/>
        </authorList>
    </citation>
    <scope>NUCLEOTIDE SEQUENCE [LARGE SCALE GENOMIC DNA]</scope>
    <source>
        <strain>LT2 / SGSC1412 / ATCC 700720</strain>
    </source>
</reference>
<proteinExistence type="inferred from homology"/>
<gene>
    <name evidence="1" type="primary">rimM</name>
    <name type="ordered locus">STM2675</name>
</gene>
<protein>
    <recommendedName>
        <fullName evidence="1">Ribosome maturation factor RimM</fullName>
    </recommendedName>
</protein>
<sequence length="182" mass="20468">MSKQLAAQVPAEPVVLGKMGSSYGIRGWLRVFSSTEDAESIFDYQPWFIQKAGQWQQVQLESWKHHNQDLIIKLKGVDDRDAANLLTNCEIVVDSSQLPALEEGDYYWKDLMGCQVVTAEGYDLGKVIDMMETGSNDVLVIKANLKDAFGIKERLVPFLDGQVIKKVDLATRTIEVDWDPGF</sequence>
<feature type="chain" id="PRO_0000163347" description="Ribosome maturation factor RimM">
    <location>
        <begin position="1"/>
        <end position="182"/>
    </location>
</feature>
<feature type="domain" description="PRC barrel" evidence="1">
    <location>
        <begin position="103"/>
        <end position="182"/>
    </location>
</feature>
<feature type="sequence conflict" description="In Ref. 1; CAA52886." evidence="2" ref="1">
    <original>K</original>
    <variation>KK</variation>
    <location>
        <position position="64"/>
    </location>
</feature>
<organism>
    <name type="scientific">Salmonella typhimurium (strain LT2 / SGSC1412 / ATCC 700720)</name>
    <dbReference type="NCBI Taxonomy" id="99287"/>
    <lineage>
        <taxon>Bacteria</taxon>
        <taxon>Pseudomonadati</taxon>
        <taxon>Pseudomonadota</taxon>
        <taxon>Gammaproteobacteria</taxon>
        <taxon>Enterobacterales</taxon>
        <taxon>Enterobacteriaceae</taxon>
        <taxon>Salmonella</taxon>
    </lineage>
</organism>
<dbReference type="EMBL" id="X74933">
    <property type="protein sequence ID" value="CAA52886.1"/>
    <property type="molecule type" value="Genomic_DNA"/>
</dbReference>
<dbReference type="EMBL" id="AE006468">
    <property type="protein sequence ID" value="AAL21564.1"/>
    <property type="molecule type" value="Genomic_DNA"/>
</dbReference>
<dbReference type="PIR" id="S37174">
    <property type="entry name" value="S37174"/>
</dbReference>
<dbReference type="RefSeq" id="NP_461605.1">
    <property type="nucleotide sequence ID" value="NC_003197.2"/>
</dbReference>
<dbReference type="RefSeq" id="WP_000043266.1">
    <property type="nucleotide sequence ID" value="NC_003197.2"/>
</dbReference>
<dbReference type="SMR" id="P0A2B5"/>
<dbReference type="STRING" id="99287.STM2675"/>
<dbReference type="PaxDb" id="99287-STM2675"/>
<dbReference type="DNASU" id="1254198"/>
<dbReference type="GeneID" id="1254198"/>
<dbReference type="KEGG" id="stm:STM2675"/>
<dbReference type="PATRIC" id="fig|99287.12.peg.2819"/>
<dbReference type="HOGENOM" id="CLU_077636_1_0_6"/>
<dbReference type="OMA" id="IKVDWDP"/>
<dbReference type="PhylomeDB" id="P0A2B5"/>
<dbReference type="BioCyc" id="SENT99287:STM2675-MONOMER"/>
<dbReference type="Proteomes" id="UP000001014">
    <property type="component" value="Chromosome"/>
</dbReference>
<dbReference type="GO" id="GO:0005829">
    <property type="term" value="C:cytosol"/>
    <property type="evidence" value="ECO:0000318"/>
    <property type="project" value="GO_Central"/>
</dbReference>
<dbReference type="GO" id="GO:0005840">
    <property type="term" value="C:ribosome"/>
    <property type="evidence" value="ECO:0007669"/>
    <property type="project" value="InterPro"/>
</dbReference>
<dbReference type="GO" id="GO:0043022">
    <property type="term" value="F:ribosome binding"/>
    <property type="evidence" value="ECO:0007669"/>
    <property type="project" value="InterPro"/>
</dbReference>
<dbReference type="GO" id="GO:0030490">
    <property type="term" value="P:maturation of SSU-rRNA"/>
    <property type="evidence" value="ECO:0000318"/>
    <property type="project" value="GO_Central"/>
</dbReference>
<dbReference type="FunFam" id="2.30.30.240:FF:000001">
    <property type="entry name" value="Ribosome maturation factor RimM"/>
    <property type="match status" value="1"/>
</dbReference>
<dbReference type="FunFam" id="2.40.30.60:FF:000001">
    <property type="entry name" value="Ribosome maturation factor RimM"/>
    <property type="match status" value="1"/>
</dbReference>
<dbReference type="Gene3D" id="2.30.30.240">
    <property type="entry name" value="PRC-barrel domain"/>
    <property type="match status" value="1"/>
</dbReference>
<dbReference type="Gene3D" id="2.40.30.60">
    <property type="entry name" value="RimM"/>
    <property type="match status" value="1"/>
</dbReference>
<dbReference type="HAMAP" id="MF_00014">
    <property type="entry name" value="Ribosome_mat_RimM"/>
    <property type="match status" value="1"/>
</dbReference>
<dbReference type="InterPro" id="IPR011033">
    <property type="entry name" value="PRC_barrel-like_sf"/>
</dbReference>
<dbReference type="InterPro" id="IPR056792">
    <property type="entry name" value="PRC_RimM"/>
</dbReference>
<dbReference type="InterPro" id="IPR011961">
    <property type="entry name" value="RimM"/>
</dbReference>
<dbReference type="InterPro" id="IPR002676">
    <property type="entry name" value="RimM_N"/>
</dbReference>
<dbReference type="InterPro" id="IPR036976">
    <property type="entry name" value="RimM_N_sf"/>
</dbReference>
<dbReference type="InterPro" id="IPR009000">
    <property type="entry name" value="Transl_B-barrel_sf"/>
</dbReference>
<dbReference type="NCBIfam" id="TIGR02273">
    <property type="entry name" value="16S_RimM"/>
    <property type="match status" value="1"/>
</dbReference>
<dbReference type="PANTHER" id="PTHR33692">
    <property type="entry name" value="RIBOSOME MATURATION FACTOR RIMM"/>
    <property type="match status" value="1"/>
</dbReference>
<dbReference type="PANTHER" id="PTHR33692:SF1">
    <property type="entry name" value="RIBOSOME MATURATION FACTOR RIMM"/>
    <property type="match status" value="1"/>
</dbReference>
<dbReference type="Pfam" id="PF24986">
    <property type="entry name" value="PRC_RimM"/>
    <property type="match status" value="1"/>
</dbReference>
<dbReference type="Pfam" id="PF01782">
    <property type="entry name" value="RimM"/>
    <property type="match status" value="1"/>
</dbReference>
<dbReference type="SUPFAM" id="SSF50346">
    <property type="entry name" value="PRC-barrel domain"/>
    <property type="match status" value="1"/>
</dbReference>
<dbReference type="SUPFAM" id="SSF50447">
    <property type="entry name" value="Translation proteins"/>
    <property type="match status" value="1"/>
</dbReference>
<comment type="function">
    <text evidence="1">An accessory protein needed during the final step in the assembly of 30S ribosomal subunit, possibly for assembly of the head region. Essential for efficient processing of 16S rRNA. May be needed both before and after RbfA during the maturation of 16S rRNA. It has affinity for free ribosomal 30S subunits but not for 70S ribosomes.</text>
</comment>
<comment type="subunit">
    <text evidence="1">Binds ribosomal protein uS19.</text>
</comment>
<comment type="subcellular location">
    <subcellularLocation>
        <location evidence="1">Cytoplasm</location>
    </subcellularLocation>
</comment>
<comment type="domain">
    <text evidence="1">The PRC barrel domain binds ribosomal protein uS19.</text>
</comment>
<comment type="similarity">
    <text evidence="1">Belongs to the RimM family.</text>
</comment>
<evidence type="ECO:0000255" key="1">
    <source>
        <dbReference type="HAMAP-Rule" id="MF_00014"/>
    </source>
</evidence>
<evidence type="ECO:0000305" key="2"/>
<keyword id="KW-0143">Chaperone</keyword>
<keyword id="KW-0963">Cytoplasm</keyword>
<keyword id="KW-1185">Reference proteome</keyword>
<keyword id="KW-0690">Ribosome biogenesis</keyword>
<keyword id="KW-0698">rRNA processing</keyword>
<accession>P0A2B5</accession>
<accession>P36246</accession>
<name>RIMM_SALTY</name>